<proteinExistence type="evidence at protein level"/>
<gene>
    <name type="primary">NMU</name>
</gene>
<keyword id="KW-0027">Amidation</keyword>
<keyword id="KW-0903">Direct protein sequencing</keyword>
<keyword id="KW-0372">Hormone</keyword>
<keyword id="KW-1185">Reference proteome</keyword>
<keyword id="KW-0964">Secreted</keyword>
<name>NMU_CHICK</name>
<feature type="peptide" id="PRO_0000019783" description="Neuromedin-U-25">
    <location>
        <begin position="1"/>
        <end position="25"/>
    </location>
</feature>
<feature type="peptide" id="PRO_0000019784" description="Neuromedin-U-9">
    <location>
        <begin position="17"/>
        <end position="25"/>
    </location>
</feature>
<feature type="modified residue" description="Asparagine amide" evidence="1">
    <location>
        <position position="25"/>
    </location>
</feature>
<organism>
    <name type="scientific">Gallus gallus</name>
    <name type="common">Chicken</name>
    <dbReference type="NCBI Taxonomy" id="9031"/>
    <lineage>
        <taxon>Eukaryota</taxon>
        <taxon>Metazoa</taxon>
        <taxon>Chordata</taxon>
        <taxon>Craniata</taxon>
        <taxon>Vertebrata</taxon>
        <taxon>Euteleostomi</taxon>
        <taxon>Archelosauria</taxon>
        <taxon>Archosauria</taxon>
        <taxon>Dinosauria</taxon>
        <taxon>Saurischia</taxon>
        <taxon>Theropoda</taxon>
        <taxon>Coelurosauria</taxon>
        <taxon>Aves</taxon>
        <taxon>Neognathae</taxon>
        <taxon>Galloanserae</taxon>
        <taxon>Galliformes</taxon>
        <taxon>Phasianidae</taxon>
        <taxon>Phasianinae</taxon>
        <taxon>Gallus</taxon>
    </lineage>
</organism>
<reference key="1">
    <citation type="journal article" date="1992" name="Regul. Pept.">
        <title>The purification and sequence analysis of an avian neuromedin U.</title>
        <authorList>
            <person name="Domin J."/>
            <person name="Benito-Orfila M.A."/>
            <person name="Nandha K.A."/>
            <person name="Aitken A."/>
            <person name="Bloom S.R."/>
        </authorList>
    </citation>
    <scope>PROTEIN SEQUENCE</scope>
</reference>
<reference key="2">
    <citation type="journal article" date="1991" name="Peptides">
        <title>Primary structure and pharmacological activity of a nonapeptide related to neuromedin U isolated from chicken intestine.</title>
        <authorList>
            <person name="O'Harte F."/>
            <person name="Bockman C.S."/>
            <person name="Zeng W."/>
            <person name="Abel P.W."/>
            <person name="Harvey S."/>
            <person name="Conlon J.M."/>
        </authorList>
    </citation>
    <scope>PROTEIN SEQUENCE OF 17-25</scope>
    <scope>AMIDATION AT ASN-25</scope>
    <source>
        <tissue>Intestine</tissue>
    </source>
</reference>
<protein>
    <recommendedName>
        <fullName>Neuromedin-U-25</fullName>
        <shortName>NmU-25</shortName>
    </recommendedName>
    <component>
        <recommendedName>
            <fullName>Neuromedin-U-9</fullName>
            <shortName>NmU-9</shortName>
        </recommendedName>
    </component>
</protein>
<dbReference type="PIR" id="A48543">
    <property type="entry name" value="A48543"/>
</dbReference>
<dbReference type="STRING" id="9031.ENSGALP00000031462"/>
<dbReference type="PaxDb" id="9031-ENSGALP00000031462"/>
<dbReference type="eggNOG" id="ENOG502S36R">
    <property type="taxonomic scope" value="Eukaryota"/>
</dbReference>
<dbReference type="HOGENOM" id="CLU_090356_0_0_1"/>
<dbReference type="InParanoid" id="P34963"/>
<dbReference type="OrthoDB" id="9879773at2759"/>
<dbReference type="Proteomes" id="UP000000539">
    <property type="component" value="Unassembled WGS sequence"/>
</dbReference>
<dbReference type="GO" id="GO:0005576">
    <property type="term" value="C:extracellular region"/>
    <property type="evidence" value="ECO:0007669"/>
    <property type="project" value="UniProtKB-SubCell"/>
</dbReference>
<dbReference type="GO" id="GO:0005179">
    <property type="term" value="F:hormone activity"/>
    <property type="evidence" value="ECO:0007669"/>
    <property type="project" value="UniProtKB-KW"/>
</dbReference>
<dbReference type="GO" id="GO:0006940">
    <property type="term" value="P:regulation of smooth muscle contraction"/>
    <property type="evidence" value="ECO:0007669"/>
    <property type="project" value="InterPro"/>
</dbReference>
<dbReference type="InterPro" id="IPR018070">
    <property type="entry name" value="Neuromedin-U_amidation-site"/>
</dbReference>
<dbReference type="InterPro" id="IPR008200">
    <property type="entry name" value="NMU_C"/>
</dbReference>
<dbReference type="Pfam" id="PF02070">
    <property type="entry name" value="NMU"/>
    <property type="match status" value="1"/>
</dbReference>
<dbReference type="SMART" id="SM00084">
    <property type="entry name" value="NMU"/>
    <property type="match status" value="1"/>
</dbReference>
<dbReference type="PROSITE" id="PS00967">
    <property type="entry name" value="NMU"/>
    <property type="match status" value="1"/>
</dbReference>
<comment type="function">
    <text>Stimulates uterine smooth muscle contraction and causes selective vasoconstriction.</text>
</comment>
<comment type="subcellular location">
    <subcellularLocation>
        <location>Secreted</location>
    </subcellularLocation>
</comment>
<comment type="similarity">
    <text evidence="2">Belongs to the NmU family.</text>
</comment>
<accession>P34963</accession>
<evidence type="ECO:0000269" key="1">
    <source>
    </source>
</evidence>
<evidence type="ECO:0000305" key="2"/>
<sequence>YKVDEDLQGAGGIQSRGYFFFRPRN</sequence>